<reference key="1">
    <citation type="journal article" date="2004" name="Proc. Natl. Acad. Sci. U.S.A.">
        <title>The louse-borne human pathogen Bartonella quintana is a genomic derivative of the zoonotic agent Bartonella henselae.</title>
        <authorList>
            <person name="Alsmark U.C.M."/>
            <person name="Frank A.C."/>
            <person name="Karlberg E.O."/>
            <person name="Legault B.-A."/>
            <person name="Ardell D.H."/>
            <person name="Canbaeck B."/>
            <person name="Eriksson A.-S."/>
            <person name="Naeslund A.K."/>
            <person name="Handley S.A."/>
            <person name="Huvet M."/>
            <person name="La Scola B."/>
            <person name="Holmberg M."/>
            <person name="Andersson S.G.E."/>
        </authorList>
    </citation>
    <scope>NUCLEOTIDE SEQUENCE [LARGE SCALE GENOMIC DNA]</scope>
    <source>
        <strain>Toulouse</strain>
    </source>
</reference>
<organism>
    <name type="scientific">Bartonella quintana (strain Toulouse)</name>
    <name type="common">Rochalimaea quintana</name>
    <dbReference type="NCBI Taxonomy" id="283165"/>
    <lineage>
        <taxon>Bacteria</taxon>
        <taxon>Pseudomonadati</taxon>
        <taxon>Pseudomonadota</taxon>
        <taxon>Alphaproteobacteria</taxon>
        <taxon>Hyphomicrobiales</taxon>
        <taxon>Bartonellaceae</taxon>
        <taxon>Bartonella</taxon>
    </lineage>
</organism>
<feature type="chain" id="PRO_0000250878" description="NADH-quinone oxidoreductase subunit I">
    <location>
        <begin position="1"/>
        <end position="163"/>
    </location>
</feature>
<feature type="domain" description="4Fe-4S ferredoxin-type 1" evidence="1">
    <location>
        <begin position="53"/>
        <end position="83"/>
    </location>
</feature>
<feature type="domain" description="4Fe-4S ferredoxin-type 2" evidence="1">
    <location>
        <begin position="94"/>
        <end position="123"/>
    </location>
</feature>
<feature type="binding site" evidence="1">
    <location>
        <position position="63"/>
    </location>
    <ligand>
        <name>[4Fe-4S] cluster</name>
        <dbReference type="ChEBI" id="CHEBI:49883"/>
        <label>1</label>
    </ligand>
</feature>
<feature type="binding site" evidence="1">
    <location>
        <position position="66"/>
    </location>
    <ligand>
        <name>[4Fe-4S] cluster</name>
        <dbReference type="ChEBI" id="CHEBI:49883"/>
        <label>1</label>
    </ligand>
</feature>
<feature type="binding site" evidence="1">
    <location>
        <position position="69"/>
    </location>
    <ligand>
        <name>[4Fe-4S] cluster</name>
        <dbReference type="ChEBI" id="CHEBI:49883"/>
        <label>1</label>
    </ligand>
</feature>
<feature type="binding site" evidence="1">
    <location>
        <position position="73"/>
    </location>
    <ligand>
        <name>[4Fe-4S] cluster</name>
        <dbReference type="ChEBI" id="CHEBI:49883"/>
        <label>2</label>
    </ligand>
</feature>
<feature type="binding site" evidence="1">
    <location>
        <position position="103"/>
    </location>
    <ligand>
        <name>[4Fe-4S] cluster</name>
        <dbReference type="ChEBI" id="CHEBI:49883"/>
        <label>2</label>
    </ligand>
</feature>
<feature type="binding site" evidence="1">
    <location>
        <position position="106"/>
    </location>
    <ligand>
        <name>[4Fe-4S] cluster</name>
        <dbReference type="ChEBI" id="CHEBI:49883"/>
        <label>2</label>
    </ligand>
</feature>
<feature type="binding site" evidence="1">
    <location>
        <position position="109"/>
    </location>
    <ligand>
        <name>[4Fe-4S] cluster</name>
        <dbReference type="ChEBI" id="CHEBI:49883"/>
        <label>2</label>
    </ligand>
</feature>
<feature type="binding site" evidence="1">
    <location>
        <position position="113"/>
    </location>
    <ligand>
        <name>[4Fe-4S] cluster</name>
        <dbReference type="ChEBI" id="CHEBI:49883"/>
        <label>1</label>
    </ligand>
</feature>
<sequence>MSGLIQAAKSLLLLEFVSAFFLAMRQFFSPKPTINYPYEKGVVSQRFRGEHALRRYPNGEERCIACKLCEAICPAQAITIEAGPRGNDGTRRTVRYDIDMVKCIYCGFCQEACPVEAIVEGPNFEFATEMREELYYDKEKLLMNGDRWEREIARNILIDAPYR</sequence>
<evidence type="ECO:0000255" key="1">
    <source>
        <dbReference type="HAMAP-Rule" id="MF_01351"/>
    </source>
</evidence>
<comment type="function">
    <text evidence="1">NDH-1 shuttles electrons from NADH, via FMN and iron-sulfur (Fe-S) centers, to quinones in the respiratory chain. The immediate electron acceptor for the enzyme in this species is believed to be ubiquinone. Couples the redox reaction to proton translocation (for every two electrons transferred, four hydrogen ions are translocated across the cytoplasmic membrane), and thus conserves the redox energy in a proton gradient.</text>
</comment>
<comment type="catalytic activity">
    <reaction evidence="1">
        <text>a quinone + NADH + 5 H(+)(in) = a quinol + NAD(+) + 4 H(+)(out)</text>
        <dbReference type="Rhea" id="RHEA:57888"/>
        <dbReference type="ChEBI" id="CHEBI:15378"/>
        <dbReference type="ChEBI" id="CHEBI:24646"/>
        <dbReference type="ChEBI" id="CHEBI:57540"/>
        <dbReference type="ChEBI" id="CHEBI:57945"/>
        <dbReference type="ChEBI" id="CHEBI:132124"/>
    </reaction>
</comment>
<comment type="cofactor">
    <cofactor evidence="1">
        <name>[4Fe-4S] cluster</name>
        <dbReference type="ChEBI" id="CHEBI:49883"/>
    </cofactor>
    <text evidence="1">Binds 2 [4Fe-4S] clusters per subunit.</text>
</comment>
<comment type="subunit">
    <text evidence="1">NDH-1 is composed of 14 different subunits. Subunits NuoA, H, J, K, L, M, N constitute the membrane sector of the complex.</text>
</comment>
<comment type="subcellular location">
    <subcellularLocation>
        <location evidence="1">Cell inner membrane</location>
        <topology evidence="1">Peripheral membrane protein</topology>
    </subcellularLocation>
</comment>
<comment type="similarity">
    <text evidence="1">Belongs to the complex I 23 kDa subunit family.</text>
</comment>
<proteinExistence type="inferred from homology"/>
<accession>Q6FZY3</accession>
<dbReference type="EC" id="7.1.1.-" evidence="1"/>
<dbReference type="EMBL" id="BX897700">
    <property type="protein sequence ID" value="CAF26064.1"/>
    <property type="molecule type" value="Genomic_DNA"/>
</dbReference>
<dbReference type="RefSeq" id="WP_011179334.1">
    <property type="nucleotide sequence ID" value="NC_005955.1"/>
</dbReference>
<dbReference type="SMR" id="Q6FZY3"/>
<dbReference type="GeneID" id="56533064"/>
<dbReference type="KEGG" id="bqu:BQ05720"/>
<dbReference type="eggNOG" id="COG1143">
    <property type="taxonomic scope" value="Bacteria"/>
</dbReference>
<dbReference type="HOGENOM" id="CLU_067218_5_1_5"/>
<dbReference type="OrthoDB" id="9808559at2"/>
<dbReference type="Proteomes" id="UP000000597">
    <property type="component" value="Chromosome"/>
</dbReference>
<dbReference type="GO" id="GO:0005886">
    <property type="term" value="C:plasma membrane"/>
    <property type="evidence" value="ECO:0007669"/>
    <property type="project" value="UniProtKB-SubCell"/>
</dbReference>
<dbReference type="GO" id="GO:0051539">
    <property type="term" value="F:4 iron, 4 sulfur cluster binding"/>
    <property type="evidence" value="ECO:0007669"/>
    <property type="project" value="UniProtKB-KW"/>
</dbReference>
<dbReference type="GO" id="GO:0005506">
    <property type="term" value="F:iron ion binding"/>
    <property type="evidence" value="ECO:0007669"/>
    <property type="project" value="UniProtKB-UniRule"/>
</dbReference>
<dbReference type="GO" id="GO:0050136">
    <property type="term" value="F:NADH:ubiquinone reductase (non-electrogenic) activity"/>
    <property type="evidence" value="ECO:0007669"/>
    <property type="project" value="UniProtKB-UniRule"/>
</dbReference>
<dbReference type="GO" id="GO:0048038">
    <property type="term" value="F:quinone binding"/>
    <property type="evidence" value="ECO:0007669"/>
    <property type="project" value="UniProtKB-KW"/>
</dbReference>
<dbReference type="GO" id="GO:0009060">
    <property type="term" value="P:aerobic respiration"/>
    <property type="evidence" value="ECO:0007669"/>
    <property type="project" value="TreeGrafter"/>
</dbReference>
<dbReference type="FunFam" id="3.30.70.3270:FF:000001">
    <property type="entry name" value="NADH-quinone oxidoreductase subunit I 1"/>
    <property type="match status" value="1"/>
</dbReference>
<dbReference type="Gene3D" id="3.30.70.3270">
    <property type="match status" value="1"/>
</dbReference>
<dbReference type="HAMAP" id="MF_01351">
    <property type="entry name" value="NDH1_NuoI"/>
    <property type="match status" value="1"/>
</dbReference>
<dbReference type="InterPro" id="IPR017896">
    <property type="entry name" value="4Fe4S_Fe-S-bd"/>
</dbReference>
<dbReference type="InterPro" id="IPR017900">
    <property type="entry name" value="4Fe4S_Fe_S_CS"/>
</dbReference>
<dbReference type="InterPro" id="IPR010226">
    <property type="entry name" value="NADH_quinone_OxRdtase_chainI"/>
</dbReference>
<dbReference type="NCBIfam" id="TIGR01971">
    <property type="entry name" value="NuoI"/>
    <property type="match status" value="1"/>
</dbReference>
<dbReference type="NCBIfam" id="NF004538">
    <property type="entry name" value="PRK05888.1-4"/>
    <property type="match status" value="1"/>
</dbReference>
<dbReference type="NCBIfam" id="NF004539">
    <property type="entry name" value="PRK05888.1-5"/>
    <property type="match status" value="1"/>
</dbReference>
<dbReference type="PANTHER" id="PTHR10849:SF20">
    <property type="entry name" value="NADH DEHYDROGENASE [UBIQUINONE] IRON-SULFUR PROTEIN 8, MITOCHONDRIAL"/>
    <property type="match status" value="1"/>
</dbReference>
<dbReference type="PANTHER" id="PTHR10849">
    <property type="entry name" value="NADH DEHYDROGENASE UBIQUINONE IRON-SULFUR PROTEIN 8, MITOCHONDRIAL"/>
    <property type="match status" value="1"/>
</dbReference>
<dbReference type="Pfam" id="PF12838">
    <property type="entry name" value="Fer4_7"/>
    <property type="match status" value="1"/>
</dbReference>
<dbReference type="SUPFAM" id="SSF54862">
    <property type="entry name" value="4Fe-4S ferredoxins"/>
    <property type="match status" value="1"/>
</dbReference>
<dbReference type="PROSITE" id="PS00198">
    <property type="entry name" value="4FE4S_FER_1"/>
    <property type="match status" value="2"/>
</dbReference>
<dbReference type="PROSITE" id="PS51379">
    <property type="entry name" value="4FE4S_FER_2"/>
    <property type="match status" value="2"/>
</dbReference>
<gene>
    <name evidence="1" type="primary">nuoI</name>
    <name type="ordered locus">BQ05720</name>
</gene>
<protein>
    <recommendedName>
        <fullName evidence="1">NADH-quinone oxidoreductase subunit I</fullName>
        <ecNumber evidence="1">7.1.1.-</ecNumber>
    </recommendedName>
    <alternativeName>
        <fullName evidence="1">NADH dehydrogenase I subunit I</fullName>
    </alternativeName>
    <alternativeName>
        <fullName evidence="1">NDH-1 subunit I</fullName>
    </alternativeName>
</protein>
<keyword id="KW-0004">4Fe-4S</keyword>
<keyword id="KW-0997">Cell inner membrane</keyword>
<keyword id="KW-1003">Cell membrane</keyword>
<keyword id="KW-0408">Iron</keyword>
<keyword id="KW-0411">Iron-sulfur</keyword>
<keyword id="KW-0472">Membrane</keyword>
<keyword id="KW-0479">Metal-binding</keyword>
<keyword id="KW-0520">NAD</keyword>
<keyword id="KW-0874">Quinone</keyword>
<keyword id="KW-0677">Repeat</keyword>
<keyword id="KW-1278">Translocase</keyword>
<keyword id="KW-0830">Ubiquinone</keyword>
<name>NUOI_BARQU</name>